<evidence type="ECO:0000255" key="1"/>
<evidence type="ECO:0000255" key="2">
    <source>
        <dbReference type="PROSITE-ProRule" id="PRU00521"/>
    </source>
</evidence>
<evidence type="ECO:0000269" key="3">
    <source>
    </source>
</evidence>
<evidence type="ECO:0000305" key="4"/>
<feature type="chain" id="PRO_0000150714" description="Olfactory receptor 10Q1">
    <location>
        <begin position="1"/>
        <end position="319"/>
    </location>
</feature>
<feature type="topological domain" description="Extracellular" evidence="1">
    <location>
        <begin position="1"/>
        <end position="29"/>
    </location>
</feature>
<feature type="transmembrane region" description="Helical; Name=1" evidence="1">
    <location>
        <begin position="30"/>
        <end position="50"/>
    </location>
</feature>
<feature type="topological domain" description="Cytoplasmic" evidence="1">
    <location>
        <begin position="51"/>
        <end position="58"/>
    </location>
</feature>
<feature type="transmembrane region" description="Helical; Name=2" evidence="1">
    <location>
        <begin position="59"/>
        <end position="79"/>
    </location>
</feature>
<feature type="topological domain" description="Extracellular" evidence="1">
    <location>
        <begin position="80"/>
        <end position="103"/>
    </location>
</feature>
<feature type="transmembrane region" description="Helical; Name=3" evidence="1">
    <location>
        <begin position="104"/>
        <end position="124"/>
    </location>
</feature>
<feature type="topological domain" description="Cytoplasmic" evidence="1">
    <location>
        <begin position="125"/>
        <end position="143"/>
    </location>
</feature>
<feature type="transmembrane region" description="Helical; Name=4" evidence="1">
    <location>
        <begin position="144"/>
        <end position="164"/>
    </location>
</feature>
<feature type="topological domain" description="Extracellular" evidence="1">
    <location>
        <begin position="165"/>
        <end position="202"/>
    </location>
</feature>
<feature type="transmembrane region" description="Helical; Name=5" evidence="1">
    <location>
        <begin position="203"/>
        <end position="222"/>
    </location>
</feature>
<feature type="topological domain" description="Cytoplasmic" evidence="1">
    <location>
        <begin position="223"/>
        <end position="242"/>
    </location>
</feature>
<feature type="transmembrane region" description="Helical; Name=6" evidence="1">
    <location>
        <begin position="243"/>
        <end position="263"/>
    </location>
</feature>
<feature type="topological domain" description="Extracellular" evidence="1">
    <location>
        <begin position="264"/>
        <end position="276"/>
    </location>
</feature>
<feature type="transmembrane region" description="Helical; Name=7" evidence="1">
    <location>
        <begin position="277"/>
        <end position="297"/>
    </location>
</feature>
<feature type="topological domain" description="Cytoplasmic" evidence="1">
    <location>
        <begin position="298"/>
        <end position="319"/>
    </location>
</feature>
<feature type="glycosylation site" description="N-linked (GlcNAc...) asparagine" evidence="1">
    <location>
        <position position="9"/>
    </location>
</feature>
<feature type="disulfide bond" evidence="2">
    <location>
        <begin position="101"/>
        <end position="194"/>
    </location>
</feature>
<feature type="sequence variant" id="VAR_024129" description="In dbSNP:rs4245219." evidence="3">
    <original>E</original>
    <variation>D</variation>
    <location>
        <position position="12"/>
    </location>
</feature>
<feature type="sequence variant" id="VAR_062065" description="In dbSNP:rs11229301." evidence="3">
    <original>R</original>
    <variation>C</variation>
    <location>
        <position position="191"/>
    </location>
</feature>
<gene>
    <name type="primary">OR10Q1</name>
</gene>
<accession>Q8NGQ4</accession>
<accession>B9EIL7</accession>
<accession>Q6IFG4</accession>
<reference key="1">
    <citation type="submission" date="2001-07" db="EMBL/GenBank/DDBJ databases">
        <title>Genome-wide discovery and analysis of human seven transmembrane helix receptor genes.</title>
        <authorList>
            <person name="Suwa M."/>
            <person name="Sato T."/>
            <person name="Okouchi I."/>
            <person name="Arita M."/>
            <person name="Futami K."/>
            <person name="Matsumoto S."/>
            <person name="Tsutsumi S."/>
            <person name="Aburatani H."/>
            <person name="Asai K."/>
            <person name="Akiyama Y."/>
        </authorList>
    </citation>
    <scope>NUCLEOTIDE SEQUENCE [GENOMIC DNA]</scope>
</reference>
<reference key="2">
    <citation type="submission" date="2005-07" db="EMBL/GenBank/DDBJ databases">
        <authorList>
            <person name="Mural R.J."/>
            <person name="Istrail S."/>
            <person name="Sutton G.G."/>
            <person name="Florea L."/>
            <person name="Halpern A.L."/>
            <person name="Mobarry C.M."/>
            <person name="Lippert R."/>
            <person name="Walenz B."/>
            <person name="Shatkay H."/>
            <person name="Dew I."/>
            <person name="Miller J.R."/>
            <person name="Flanigan M.J."/>
            <person name="Edwards N.J."/>
            <person name="Bolanos R."/>
            <person name="Fasulo D."/>
            <person name="Halldorsson B.V."/>
            <person name="Hannenhalli S."/>
            <person name="Turner R."/>
            <person name="Yooseph S."/>
            <person name="Lu F."/>
            <person name="Nusskern D.R."/>
            <person name="Shue B.C."/>
            <person name="Zheng X.H."/>
            <person name="Zhong F."/>
            <person name="Delcher A.L."/>
            <person name="Huson D.H."/>
            <person name="Kravitz S.A."/>
            <person name="Mouchard L."/>
            <person name="Reinert K."/>
            <person name="Remington K.A."/>
            <person name="Clark A.G."/>
            <person name="Waterman M.S."/>
            <person name="Eichler E.E."/>
            <person name="Adams M.D."/>
            <person name="Hunkapiller M.W."/>
            <person name="Myers E.W."/>
            <person name="Venter J.C."/>
        </authorList>
    </citation>
    <scope>NUCLEOTIDE SEQUENCE [LARGE SCALE GENOMIC DNA]</scope>
</reference>
<reference key="3">
    <citation type="journal article" date="2004" name="Genome Res.">
        <title>The status, quality, and expansion of the NIH full-length cDNA project: the Mammalian Gene Collection (MGC).</title>
        <authorList>
            <consortium name="The MGC Project Team"/>
        </authorList>
    </citation>
    <scope>NUCLEOTIDE SEQUENCE [LARGE SCALE MRNA]</scope>
    <scope>VARIANTS ASP-12 AND CYS-191</scope>
</reference>
<reference key="4">
    <citation type="journal article" date="2004" name="Proc. Natl. Acad. Sci. U.S.A.">
        <title>The human olfactory receptor gene family.</title>
        <authorList>
            <person name="Malnic B."/>
            <person name="Godfrey P.A."/>
            <person name="Buck L.B."/>
        </authorList>
    </citation>
    <scope>IDENTIFICATION</scope>
</reference>
<reference key="5">
    <citation type="journal article" date="2004" name="Proc. Natl. Acad. Sci. U.S.A.">
        <authorList>
            <person name="Malnic B."/>
            <person name="Godfrey P.A."/>
            <person name="Buck L.B."/>
        </authorList>
    </citation>
    <scope>ERRATUM OF PUBMED:14983052</scope>
</reference>
<comment type="function">
    <text evidence="4">Odorant receptor.</text>
</comment>
<comment type="subcellular location">
    <subcellularLocation>
        <location>Cell membrane</location>
        <topology>Multi-pass membrane protein</topology>
    </subcellularLocation>
</comment>
<comment type="similarity">
    <text evidence="2">Belongs to the G-protein coupled receptor 1 family.</text>
</comment>
<comment type="online information" name="Human Olfactory Receptor Data Exploratorium (HORDE)">
    <link uri="http://genome.weizmann.ac.il/horde/card/index/symbol:OR10Q1"/>
</comment>
<dbReference type="EMBL" id="AB065735">
    <property type="protein sequence ID" value="BAC05956.1"/>
    <property type="molecule type" value="Genomic_DNA"/>
</dbReference>
<dbReference type="EMBL" id="CH471076">
    <property type="protein sequence ID" value="EAW73801.1"/>
    <property type="molecule type" value="Genomic_DNA"/>
</dbReference>
<dbReference type="EMBL" id="BC140731">
    <property type="protein sequence ID" value="AAI40732.1"/>
    <property type="molecule type" value="mRNA"/>
</dbReference>
<dbReference type="EMBL" id="BK004298">
    <property type="protein sequence ID" value="DAA04696.1"/>
    <property type="molecule type" value="Genomic_DNA"/>
</dbReference>
<dbReference type="CCDS" id="CCDS31547.1"/>
<dbReference type="RefSeq" id="NP_001004471.1">
    <property type="nucleotide sequence ID" value="NM_001004471.2"/>
</dbReference>
<dbReference type="SMR" id="Q8NGQ4"/>
<dbReference type="FunCoup" id="Q8NGQ4">
    <property type="interactions" value="417"/>
</dbReference>
<dbReference type="STRING" id="9606.ENSP00000314324"/>
<dbReference type="GlyCosmos" id="Q8NGQ4">
    <property type="glycosylation" value="1 site, No reported glycans"/>
</dbReference>
<dbReference type="GlyGen" id="Q8NGQ4">
    <property type="glycosylation" value="1 site"/>
</dbReference>
<dbReference type="iPTMnet" id="Q8NGQ4"/>
<dbReference type="PhosphoSitePlus" id="Q8NGQ4"/>
<dbReference type="BioMuta" id="OR10Q1"/>
<dbReference type="DMDM" id="38372748"/>
<dbReference type="MassIVE" id="Q8NGQ4"/>
<dbReference type="PaxDb" id="9606-ENSP00000314324"/>
<dbReference type="Antibodypedia" id="62821">
    <property type="antibodies" value="17 antibodies from 12 providers"/>
</dbReference>
<dbReference type="DNASU" id="219960"/>
<dbReference type="Ensembl" id="ENST00000316770.2">
    <property type="protein sequence ID" value="ENSP00000314324.2"/>
    <property type="gene ID" value="ENSG00000180475.4"/>
</dbReference>
<dbReference type="GeneID" id="219960"/>
<dbReference type="KEGG" id="hsa:219960"/>
<dbReference type="MANE-Select" id="ENST00000316770.2">
    <property type="protein sequence ID" value="ENSP00000314324.2"/>
    <property type="RefSeq nucleotide sequence ID" value="NM_001004471.2"/>
    <property type="RefSeq protein sequence ID" value="NP_001004471.1"/>
</dbReference>
<dbReference type="UCSC" id="uc010rkd.2">
    <property type="organism name" value="human"/>
</dbReference>
<dbReference type="AGR" id="HGNC:15134"/>
<dbReference type="CTD" id="219960"/>
<dbReference type="GeneCards" id="OR10Q1"/>
<dbReference type="HGNC" id="HGNC:15134">
    <property type="gene designation" value="OR10Q1"/>
</dbReference>
<dbReference type="HPA" id="ENSG00000180475">
    <property type="expression patterns" value="Not detected"/>
</dbReference>
<dbReference type="neXtProt" id="NX_Q8NGQ4"/>
<dbReference type="PharmGKB" id="PA31994"/>
<dbReference type="VEuPathDB" id="HostDB:ENSG00000180475"/>
<dbReference type="eggNOG" id="ENOG502RKK8">
    <property type="taxonomic scope" value="Eukaryota"/>
</dbReference>
<dbReference type="GeneTree" id="ENSGT01090000260045"/>
<dbReference type="HOGENOM" id="CLU_012526_1_2_1"/>
<dbReference type="InParanoid" id="Q8NGQ4"/>
<dbReference type="OMA" id="LCTQMLG"/>
<dbReference type="OrthoDB" id="9443421at2759"/>
<dbReference type="PAN-GO" id="Q8NGQ4">
    <property type="GO annotations" value="2 GO annotations based on evolutionary models"/>
</dbReference>
<dbReference type="PhylomeDB" id="Q8NGQ4"/>
<dbReference type="TreeFam" id="TF352734"/>
<dbReference type="PathwayCommons" id="Q8NGQ4"/>
<dbReference type="Reactome" id="R-HSA-9752946">
    <property type="pathway name" value="Expression and translocation of olfactory receptors"/>
</dbReference>
<dbReference type="BioGRID-ORCS" id="219960">
    <property type="hits" value="11 hits in 742 CRISPR screens"/>
</dbReference>
<dbReference type="GeneWiki" id="OR10Q1"/>
<dbReference type="GenomeRNAi" id="219960"/>
<dbReference type="Pharos" id="Q8NGQ4">
    <property type="development level" value="Tdark"/>
</dbReference>
<dbReference type="PRO" id="PR:Q8NGQ4"/>
<dbReference type="Proteomes" id="UP000005640">
    <property type="component" value="Chromosome 11"/>
</dbReference>
<dbReference type="RNAct" id="Q8NGQ4">
    <property type="molecule type" value="protein"/>
</dbReference>
<dbReference type="Bgee" id="ENSG00000180475">
    <property type="expression patterns" value="Expressed in stromal cell of endometrium and 16 other cell types or tissues"/>
</dbReference>
<dbReference type="GO" id="GO:0005886">
    <property type="term" value="C:plasma membrane"/>
    <property type="evidence" value="ECO:0007669"/>
    <property type="project" value="UniProtKB-SubCell"/>
</dbReference>
<dbReference type="GO" id="GO:0004930">
    <property type="term" value="F:G protein-coupled receptor activity"/>
    <property type="evidence" value="ECO:0007669"/>
    <property type="project" value="UniProtKB-KW"/>
</dbReference>
<dbReference type="GO" id="GO:0005549">
    <property type="term" value="F:odorant binding"/>
    <property type="evidence" value="ECO:0000318"/>
    <property type="project" value="GO_Central"/>
</dbReference>
<dbReference type="GO" id="GO:0004984">
    <property type="term" value="F:olfactory receptor activity"/>
    <property type="evidence" value="ECO:0000318"/>
    <property type="project" value="GO_Central"/>
</dbReference>
<dbReference type="CDD" id="cd15225">
    <property type="entry name" value="7tmA_OR10A-like"/>
    <property type="match status" value="1"/>
</dbReference>
<dbReference type="FunFam" id="1.10.1220.70:FF:000001">
    <property type="entry name" value="Olfactory receptor"/>
    <property type="match status" value="1"/>
</dbReference>
<dbReference type="FunFam" id="1.20.1070.10:FF:000001">
    <property type="entry name" value="Olfactory receptor"/>
    <property type="match status" value="1"/>
</dbReference>
<dbReference type="Gene3D" id="1.20.1070.10">
    <property type="entry name" value="Rhodopsin 7-helix transmembrane proteins"/>
    <property type="match status" value="1"/>
</dbReference>
<dbReference type="InterPro" id="IPR000276">
    <property type="entry name" value="GPCR_Rhodpsn"/>
</dbReference>
<dbReference type="InterPro" id="IPR017452">
    <property type="entry name" value="GPCR_Rhodpsn_7TM"/>
</dbReference>
<dbReference type="InterPro" id="IPR000725">
    <property type="entry name" value="Olfact_rcpt"/>
</dbReference>
<dbReference type="PANTHER" id="PTHR26453">
    <property type="entry name" value="OLFACTORY RECEPTOR"/>
    <property type="match status" value="1"/>
</dbReference>
<dbReference type="Pfam" id="PF13853">
    <property type="entry name" value="7tm_4"/>
    <property type="match status" value="1"/>
</dbReference>
<dbReference type="PRINTS" id="PR00237">
    <property type="entry name" value="GPCRRHODOPSN"/>
</dbReference>
<dbReference type="PRINTS" id="PR00245">
    <property type="entry name" value="OLFACTORYR"/>
</dbReference>
<dbReference type="SUPFAM" id="SSF81321">
    <property type="entry name" value="Family A G protein-coupled receptor-like"/>
    <property type="match status" value="1"/>
</dbReference>
<dbReference type="PROSITE" id="PS00237">
    <property type="entry name" value="G_PROTEIN_RECEP_F1_1"/>
    <property type="match status" value="1"/>
</dbReference>
<dbReference type="PROSITE" id="PS50262">
    <property type="entry name" value="G_PROTEIN_RECEP_F1_2"/>
    <property type="match status" value="1"/>
</dbReference>
<sequence length="319" mass="35602">MPVGKLVFNQSEPTEFVFRAFTTATEFQVLLFLLFLLLYLMILCGNTAIIWVVCTHSTLRTPMYFFLSNLSFLELCYTTVVVPLMLSNILGAQKPISLAGCGAQMFFFVTLGSTDCFLLAIMAYDRYVAICHPLHYTLIMTRELCTQMLGGALGLALFPSLQLTALIFTLPFCGHHQEINHFLCDVPPVLRLACADIRVHQAVLYVVSILVLTIPFLLICVSYVFITCAILSIRSAEGRRRAFSTCSFHLTVVLLQYGCCSLVYLRPRSSTSEDEDSQIALVYTFVTPLLNPLLYSLRNKDVKGALRSAIIRKAASDAN</sequence>
<name>O10Q1_HUMAN</name>
<keyword id="KW-1003">Cell membrane</keyword>
<keyword id="KW-1015">Disulfide bond</keyword>
<keyword id="KW-0297">G-protein coupled receptor</keyword>
<keyword id="KW-0325">Glycoprotein</keyword>
<keyword id="KW-0472">Membrane</keyword>
<keyword id="KW-0552">Olfaction</keyword>
<keyword id="KW-0675">Receptor</keyword>
<keyword id="KW-1185">Reference proteome</keyword>
<keyword id="KW-0716">Sensory transduction</keyword>
<keyword id="KW-0807">Transducer</keyword>
<keyword id="KW-0812">Transmembrane</keyword>
<keyword id="KW-1133">Transmembrane helix</keyword>
<organism>
    <name type="scientific">Homo sapiens</name>
    <name type="common">Human</name>
    <dbReference type="NCBI Taxonomy" id="9606"/>
    <lineage>
        <taxon>Eukaryota</taxon>
        <taxon>Metazoa</taxon>
        <taxon>Chordata</taxon>
        <taxon>Craniata</taxon>
        <taxon>Vertebrata</taxon>
        <taxon>Euteleostomi</taxon>
        <taxon>Mammalia</taxon>
        <taxon>Eutheria</taxon>
        <taxon>Euarchontoglires</taxon>
        <taxon>Primates</taxon>
        <taxon>Haplorrhini</taxon>
        <taxon>Catarrhini</taxon>
        <taxon>Hominidae</taxon>
        <taxon>Homo</taxon>
    </lineage>
</organism>
<protein>
    <recommendedName>
        <fullName>Olfactory receptor 10Q1</fullName>
    </recommendedName>
    <alternativeName>
        <fullName>Olfactory receptor OR11-233</fullName>
    </alternativeName>
</protein>
<proteinExistence type="evidence at transcript level"/>